<comment type="function">
    <text evidence="1">Catalyzes the oxidation of 5,10-methylenetetrahydrofolate to 5,10-methenyltetrahydrofolate and then the hydrolysis of 5,10-methenyltetrahydrofolate to 10-formyltetrahydrofolate.</text>
</comment>
<comment type="catalytic activity">
    <reaction evidence="1">
        <text>(6R)-5,10-methylene-5,6,7,8-tetrahydrofolate + NADP(+) = (6R)-5,10-methenyltetrahydrofolate + NADPH</text>
        <dbReference type="Rhea" id="RHEA:22812"/>
        <dbReference type="ChEBI" id="CHEBI:15636"/>
        <dbReference type="ChEBI" id="CHEBI:57455"/>
        <dbReference type="ChEBI" id="CHEBI:57783"/>
        <dbReference type="ChEBI" id="CHEBI:58349"/>
        <dbReference type="EC" id="1.5.1.5"/>
    </reaction>
</comment>
<comment type="catalytic activity">
    <reaction evidence="1">
        <text>(6R)-5,10-methenyltetrahydrofolate + H2O = (6R)-10-formyltetrahydrofolate + H(+)</text>
        <dbReference type="Rhea" id="RHEA:23700"/>
        <dbReference type="ChEBI" id="CHEBI:15377"/>
        <dbReference type="ChEBI" id="CHEBI:15378"/>
        <dbReference type="ChEBI" id="CHEBI:57455"/>
        <dbReference type="ChEBI" id="CHEBI:195366"/>
        <dbReference type="EC" id="3.5.4.9"/>
    </reaction>
</comment>
<comment type="pathway">
    <text evidence="1">One-carbon metabolism; tetrahydrofolate interconversion.</text>
</comment>
<comment type="subunit">
    <text evidence="1">Homodimer.</text>
</comment>
<comment type="similarity">
    <text evidence="1">Belongs to the tetrahydrofolate dehydrogenase/cyclohydrolase family.</text>
</comment>
<gene>
    <name evidence="1" type="primary">folD</name>
    <name type="ordered locus">XC_1933</name>
</gene>
<dbReference type="EC" id="1.5.1.5" evidence="1"/>
<dbReference type="EC" id="3.5.4.9" evidence="1"/>
<dbReference type="EMBL" id="CP000050">
    <property type="protein sequence ID" value="AAY48996.1"/>
    <property type="molecule type" value="Genomic_DNA"/>
</dbReference>
<dbReference type="RefSeq" id="WP_011037331.1">
    <property type="nucleotide sequence ID" value="NZ_CP155948.1"/>
</dbReference>
<dbReference type="SMR" id="Q4UVC7"/>
<dbReference type="GeneID" id="58013244"/>
<dbReference type="KEGG" id="xcb:XC_1933"/>
<dbReference type="HOGENOM" id="CLU_034045_2_1_6"/>
<dbReference type="UniPathway" id="UPA00193"/>
<dbReference type="Proteomes" id="UP000000420">
    <property type="component" value="Chromosome"/>
</dbReference>
<dbReference type="GO" id="GO:0005829">
    <property type="term" value="C:cytosol"/>
    <property type="evidence" value="ECO:0007669"/>
    <property type="project" value="TreeGrafter"/>
</dbReference>
<dbReference type="GO" id="GO:0004477">
    <property type="term" value="F:methenyltetrahydrofolate cyclohydrolase activity"/>
    <property type="evidence" value="ECO:0007669"/>
    <property type="project" value="UniProtKB-UniRule"/>
</dbReference>
<dbReference type="GO" id="GO:0004488">
    <property type="term" value="F:methylenetetrahydrofolate dehydrogenase (NADP+) activity"/>
    <property type="evidence" value="ECO:0007669"/>
    <property type="project" value="UniProtKB-UniRule"/>
</dbReference>
<dbReference type="GO" id="GO:0000105">
    <property type="term" value="P:L-histidine biosynthetic process"/>
    <property type="evidence" value="ECO:0007669"/>
    <property type="project" value="UniProtKB-KW"/>
</dbReference>
<dbReference type="GO" id="GO:0009086">
    <property type="term" value="P:methionine biosynthetic process"/>
    <property type="evidence" value="ECO:0007669"/>
    <property type="project" value="UniProtKB-KW"/>
</dbReference>
<dbReference type="GO" id="GO:0006164">
    <property type="term" value="P:purine nucleotide biosynthetic process"/>
    <property type="evidence" value="ECO:0007669"/>
    <property type="project" value="UniProtKB-KW"/>
</dbReference>
<dbReference type="GO" id="GO:0035999">
    <property type="term" value="P:tetrahydrofolate interconversion"/>
    <property type="evidence" value="ECO:0007669"/>
    <property type="project" value="UniProtKB-UniRule"/>
</dbReference>
<dbReference type="CDD" id="cd01080">
    <property type="entry name" value="NAD_bind_m-THF_DH_Cyclohyd"/>
    <property type="match status" value="1"/>
</dbReference>
<dbReference type="FunFam" id="3.40.50.720:FF:000006">
    <property type="entry name" value="Bifunctional protein FolD"/>
    <property type="match status" value="1"/>
</dbReference>
<dbReference type="FunFam" id="3.40.50.10860:FF:000005">
    <property type="entry name" value="C-1-tetrahydrofolate synthase, cytoplasmic, putative"/>
    <property type="match status" value="1"/>
</dbReference>
<dbReference type="Gene3D" id="3.40.50.10860">
    <property type="entry name" value="Leucine Dehydrogenase, chain A, domain 1"/>
    <property type="match status" value="1"/>
</dbReference>
<dbReference type="Gene3D" id="3.40.50.720">
    <property type="entry name" value="NAD(P)-binding Rossmann-like Domain"/>
    <property type="match status" value="1"/>
</dbReference>
<dbReference type="HAMAP" id="MF_01576">
    <property type="entry name" value="THF_DHG_CYH"/>
    <property type="match status" value="1"/>
</dbReference>
<dbReference type="InterPro" id="IPR046346">
    <property type="entry name" value="Aminoacid_DH-like_N_sf"/>
</dbReference>
<dbReference type="InterPro" id="IPR036291">
    <property type="entry name" value="NAD(P)-bd_dom_sf"/>
</dbReference>
<dbReference type="InterPro" id="IPR000672">
    <property type="entry name" value="THF_DH/CycHdrlase"/>
</dbReference>
<dbReference type="InterPro" id="IPR020630">
    <property type="entry name" value="THF_DH/CycHdrlase_cat_dom"/>
</dbReference>
<dbReference type="InterPro" id="IPR020867">
    <property type="entry name" value="THF_DH/CycHdrlase_CS"/>
</dbReference>
<dbReference type="InterPro" id="IPR020631">
    <property type="entry name" value="THF_DH/CycHdrlase_NAD-bd_dom"/>
</dbReference>
<dbReference type="NCBIfam" id="NF008058">
    <property type="entry name" value="PRK10792.1"/>
    <property type="match status" value="1"/>
</dbReference>
<dbReference type="PANTHER" id="PTHR48099:SF5">
    <property type="entry name" value="C-1-TETRAHYDROFOLATE SYNTHASE, CYTOPLASMIC"/>
    <property type="match status" value="1"/>
</dbReference>
<dbReference type="PANTHER" id="PTHR48099">
    <property type="entry name" value="C-1-TETRAHYDROFOLATE SYNTHASE, CYTOPLASMIC-RELATED"/>
    <property type="match status" value="1"/>
</dbReference>
<dbReference type="Pfam" id="PF00763">
    <property type="entry name" value="THF_DHG_CYH"/>
    <property type="match status" value="1"/>
</dbReference>
<dbReference type="Pfam" id="PF02882">
    <property type="entry name" value="THF_DHG_CYH_C"/>
    <property type="match status" value="1"/>
</dbReference>
<dbReference type="PRINTS" id="PR00085">
    <property type="entry name" value="THFDHDRGNASE"/>
</dbReference>
<dbReference type="SUPFAM" id="SSF53223">
    <property type="entry name" value="Aminoacid dehydrogenase-like, N-terminal domain"/>
    <property type="match status" value="1"/>
</dbReference>
<dbReference type="SUPFAM" id="SSF51735">
    <property type="entry name" value="NAD(P)-binding Rossmann-fold domains"/>
    <property type="match status" value="1"/>
</dbReference>
<dbReference type="PROSITE" id="PS00767">
    <property type="entry name" value="THF_DHG_CYH_2"/>
    <property type="match status" value="1"/>
</dbReference>
<protein>
    <recommendedName>
        <fullName evidence="1">Bifunctional protein FolD</fullName>
    </recommendedName>
    <domain>
        <recommendedName>
            <fullName evidence="1">Methylenetetrahydrofolate dehydrogenase</fullName>
            <ecNumber evidence="1">1.5.1.5</ecNumber>
        </recommendedName>
    </domain>
    <domain>
        <recommendedName>
            <fullName evidence="1">Methenyltetrahydrofolate cyclohydrolase</fullName>
            <ecNumber evidence="1">3.5.4.9</ecNumber>
        </recommendedName>
    </domain>
</protein>
<reference key="1">
    <citation type="journal article" date="2005" name="Genome Res.">
        <title>Comparative and functional genomic analyses of the pathogenicity of phytopathogen Xanthomonas campestris pv. campestris.</title>
        <authorList>
            <person name="Qian W."/>
            <person name="Jia Y."/>
            <person name="Ren S.-X."/>
            <person name="He Y.-Q."/>
            <person name="Feng J.-X."/>
            <person name="Lu L.-F."/>
            <person name="Sun Q."/>
            <person name="Ying G."/>
            <person name="Tang D.-J."/>
            <person name="Tang H."/>
            <person name="Wu W."/>
            <person name="Hao P."/>
            <person name="Wang L."/>
            <person name="Jiang B.-L."/>
            <person name="Zeng S."/>
            <person name="Gu W.-Y."/>
            <person name="Lu G."/>
            <person name="Rong L."/>
            <person name="Tian Y."/>
            <person name="Yao Z."/>
            <person name="Fu G."/>
            <person name="Chen B."/>
            <person name="Fang R."/>
            <person name="Qiang B."/>
            <person name="Chen Z."/>
            <person name="Zhao G.-P."/>
            <person name="Tang J.-L."/>
            <person name="He C."/>
        </authorList>
    </citation>
    <scope>NUCLEOTIDE SEQUENCE [LARGE SCALE GENOMIC DNA]</scope>
    <source>
        <strain>8004</strain>
    </source>
</reference>
<sequence length="294" mass="30932">MTAPAPAALAPARLLDGRRIAEELLDGLKLRVDARLAAGKTRPGLAVVLVGGDPASSVYVRNKRRAAEKVGIEAFDYDLPQGTTEAELAALIDQLNTDPKIHGILIQLPLPGIPDANRLIQRIDPRKDVDGFHPQNVGHLALREFGLRPCTPRGIVTLLAHTDQPVRGRNATIVGVSNHVGRPMGLELLIAGCTVTSCHKFTPPDVLEASVRNADILVVAVGRPGLIPGEWVKPGAVVIDVGINRLDDGRLVGDVGFEAAAQRAGWITPVPGGVGPMTVATLMQNTLEAADAAG</sequence>
<keyword id="KW-0028">Amino-acid biosynthesis</keyword>
<keyword id="KW-0368">Histidine biosynthesis</keyword>
<keyword id="KW-0378">Hydrolase</keyword>
<keyword id="KW-0486">Methionine biosynthesis</keyword>
<keyword id="KW-0511">Multifunctional enzyme</keyword>
<keyword id="KW-0521">NADP</keyword>
<keyword id="KW-0554">One-carbon metabolism</keyword>
<keyword id="KW-0560">Oxidoreductase</keyword>
<keyword id="KW-0658">Purine biosynthesis</keyword>
<feature type="chain" id="PRO_0000268567" description="Bifunctional protein FolD">
    <location>
        <begin position="1"/>
        <end position="294"/>
    </location>
</feature>
<feature type="binding site" evidence="1">
    <location>
        <begin position="175"/>
        <end position="177"/>
    </location>
    <ligand>
        <name>NADP(+)</name>
        <dbReference type="ChEBI" id="CHEBI:58349"/>
    </ligand>
</feature>
<feature type="binding site" evidence="1">
    <location>
        <position position="243"/>
    </location>
    <ligand>
        <name>NADP(+)</name>
        <dbReference type="ChEBI" id="CHEBI:58349"/>
    </ligand>
</feature>
<accession>Q4UVC7</accession>
<name>FOLD_XANC8</name>
<evidence type="ECO:0000255" key="1">
    <source>
        <dbReference type="HAMAP-Rule" id="MF_01576"/>
    </source>
</evidence>
<proteinExistence type="inferred from homology"/>
<organism>
    <name type="scientific">Xanthomonas campestris pv. campestris (strain 8004)</name>
    <dbReference type="NCBI Taxonomy" id="314565"/>
    <lineage>
        <taxon>Bacteria</taxon>
        <taxon>Pseudomonadati</taxon>
        <taxon>Pseudomonadota</taxon>
        <taxon>Gammaproteobacteria</taxon>
        <taxon>Lysobacterales</taxon>
        <taxon>Lysobacteraceae</taxon>
        <taxon>Xanthomonas</taxon>
    </lineage>
</organism>